<dbReference type="EC" id="3.5.1.135" evidence="2"/>
<dbReference type="EMBL" id="CP000057">
    <property type="protein sequence ID" value="AAX88541.1"/>
    <property type="molecule type" value="Genomic_DNA"/>
</dbReference>
<dbReference type="SMR" id="Q4QKA6"/>
<dbReference type="KEGG" id="hit:NTHI1757"/>
<dbReference type="HOGENOM" id="CLU_152586_0_0_6"/>
<dbReference type="Proteomes" id="UP000002525">
    <property type="component" value="Chromosome"/>
</dbReference>
<dbReference type="GO" id="GO:0005829">
    <property type="term" value="C:cytosol"/>
    <property type="evidence" value="ECO:0007669"/>
    <property type="project" value="TreeGrafter"/>
</dbReference>
<dbReference type="GO" id="GO:0016813">
    <property type="term" value="F:hydrolase activity, acting on carbon-nitrogen (but not peptide) bonds, in linear amidines"/>
    <property type="evidence" value="ECO:0007669"/>
    <property type="project" value="UniProtKB-UniRule"/>
</dbReference>
<dbReference type="GO" id="GO:0106251">
    <property type="term" value="F:N4-acetylcytidine amidohydrolase activity"/>
    <property type="evidence" value="ECO:0007669"/>
    <property type="project" value="RHEA"/>
</dbReference>
<dbReference type="CDD" id="cd06552">
    <property type="entry name" value="ASCH_yqfb_like"/>
    <property type="match status" value="1"/>
</dbReference>
<dbReference type="FunFam" id="2.30.130.30:FF:000001">
    <property type="entry name" value="UPF0267 protein YqfB"/>
    <property type="match status" value="1"/>
</dbReference>
<dbReference type="Gene3D" id="2.30.130.30">
    <property type="entry name" value="Hypothetical protein"/>
    <property type="match status" value="1"/>
</dbReference>
<dbReference type="HAMAP" id="MF_00684">
    <property type="entry name" value="ac4C_amidohydr"/>
    <property type="match status" value="1"/>
</dbReference>
<dbReference type="InterPro" id="IPR008314">
    <property type="entry name" value="AC4CH"/>
</dbReference>
<dbReference type="InterPro" id="IPR007374">
    <property type="entry name" value="ASCH_domain"/>
</dbReference>
<dbReference type="InterPro" id="IPR015947">
    <property type="entry name" value="PUA-like_sf"/>
</dbReference>
<dbReference type="NCBIfam" id="NF003443">
    <property type="entry name" value="PRK04980.1"/>
    <property type="match status" value="1"/>
</dbReference>
<dbReference type="PANTHER" id="PTHR38088">
    <property type="entry name" value="UCP029143 FAMILY PROTEIN"/>
    <property type="match status" value="1"/>
</dbReference>
<dbReference type="PANTHER" id="PTHR38088:SF2">
    <property type="entry name" value="UCP029143 FAMILY PROTEIN"/>
    <property type="match status" value="1"/>
</dbReference>
<dbReference type="Pfam" id="PF04266">
    <property type="entry name" value="ASCH"/>
    <property type="match status" value="1"/>
</dbReference>
<dbReference type="PIRSF" id="PIRSF029143">
    <property type="entry name" value="UCP029143"/>
    <property type="match status" value="1"/>
</dbReference>
<dbReference type="SMART" id="SM01022">
    <property type="entry name" value="ASCH"/>
    <property type="match status" value="1"/>
</dbReference>
<dbReference type="SUPFAM" id="SSF88697">
    <property type="entry name" value="PUA domain-like"/>
    <property type="match status" value="1"/>
</dbReference>
<protein>
    <recommendedName>
        <fullName evidence="2">N(4)-acetylcytidine amidohydrolase</fullName>
        <shortName evidence="2">ac4C amidohydrolase</shortName>
        <ecNumber evidence="2">3.5.1.135</ecNumber>
    </recommendedName>
</protein>
<name>AC4CH_HAEI8</name>
<sequence>MQPNEITFYQRFEADILAGRKTITIRDKSESHFKAGDILRVGRFEDNQYFCTIEVLSVSPITLDELTEQHAKQENMGLDKLKEVIKTIYPNEHESWIINFKLIG</sequence>
<organism>
    <name type="scientific">Haemophilus influenzae (strain 86-028NP)</name>
    <dbReference type="NCBI Taxonomy" id="281310"/>
    <lineage>
        <taxon>Bacteria</taxon>
        <taxon>Pseudomonadati</taxon>
        <taxon>Pseudomonadota</taxon>
        <taxon>Gammaproteobacteria</taxon>
        <taxon>Pasteurellales</taxon>
        <taxon>Pasteurellaceae</taxon>
        <taxon>Haemophilus</taxon>
    </lineage>
</organism>
<proteinExistence type="inferred from homology"/>
<gene>
    <name type="ordered locus">NTHI1757</name>
</gene>
<accession>Q4QKA6</accession>
<evidence type="ECO:0000255" key="1"/>
<evidence type="ECO:0000255" key="2">
    <source>
        <dbReference type="HAMAP-Rule" id="MF_00684"/>
    </source>
</evidence>
<keyword id="KW-0378">Hydrolase</keyword>
<comment type="function">
    <text evidence="2">Catalyzes the hydrolysis of N(4)-acetylcytidine (ac4C).</text>
</comment>
<comment type="catalytic activity">
    <reaction evidence="2">
        <text>N(4)-acetylcytidine + H2O = cytidine + acetate + H(+)</text>
        <dbReference type="Rhea" id="RHEA:62932"/>
        <dbReference type="ChEBI" id="CHEBI:15377"/>
        <dbReference type="ChEBI" id="CHEBI:15378"/>
        <dbReference type="ChEBI" id="CHEBI:17562"/>
        <dbReference type="ChEBI" id="CHEBI:30089"/>
        <dbReference type="ChEBI" id="CHEBI:70989"/>
        <dbReference type="EC" id="3.5.1.135"/>
    </reaction>
</comment>
<comment type="catalytic activity">
    <reaction evidence="2">
        <text>N(4)-acetyl-2'-deoxycytidine + H2O = 2'-deoxycytidine + acetate + H(+)</text>
        <dbReference type="Rhea" id="RHEA:62936"/>
        <dbReference type="ChEBI" id="CHEBI:15377"/>
        <dbReference type="ChEBI" id="CHEBI:15378"/>
        <dbReference type="ChEBI" id="CHEBI:15698"/>
        <dbReference type="ChEBI" id="CHEBI:30089"/>
        <dbReference type="ChEBI" id="CHEBI:146133"/>
        <dbReference type="EC" id="3.5.1.135"/>
    </reaction>
</comment>
<comment type="catalytic activity">
    <reaction evidence="2">
        <text>N(4)-acetylcytosine + H2O = cytosine + acetate + H(+)</text>
        <dbReference type="Rhea" id="RHEA:62940"/>
        <dbReference type="ChEBI" id="CHEBI:15377"/>
        <dbReference type="ChEBI" id="CHEBI:15378"/>
        <dbReference type="ChEBI" id="CHEBI:16040"/>
        <dbReference type="ChEBI" id="CHEBI:30089"/>
        <dbReference type="ChEBI" id="CHEBI:146134"/>
        <dbReference type="EC" id="3.5.1.135"/>
    </reaction>
</comment>
<comment type="similarity">
    <text evidence="2">Belongs to the N(4)-acetylcytidine amidohydrolase family.</text>
</comment>
<reference key="1">
    <citation type="journal article" date="2005" name="J. Bacteriol.">
        <title>Genomic sequence of an otitis media isolate of nontypeable Haemophilus influenzae: comparative study with H. influenzae serotype d, strain KW20.</title>
        <authorList>
            <person name="Harrison A."/>
            <person name="Dyer D.W."/>
            <person name="Gillaspy A."/>
            <person name="Ray W.C."/>
            <person name="Mungur R."/>
            <person name="Carson M.B."/>
            <person name="Zhong H."/>
            <person name="Gipson J."/>
            <person name="Gipson M."/>
            <person name="Johnson L.S."/>
            <person name="Lewis L."/>
            <person name="Bakaletz L.O."/>
            <person name="Munson R.S. Jr."/>
        </authorList>
    </citation>
    <scope>NUCLEOTIDE SEQUENCE [LARGE SCALE GENOMIC DNA]</scope>
    <source>
        <strain>86-028NP</strain>
    </source>
</reference>
<feature type="chain" id="PRO_1000044949" description="N(4)-acetylcytidine amidohydrolase">
    <location>
        <begin position="1"/>
        <end position="104"/>
    </location>
</feature>
<feature type="domain" description="ASCH" evidence="1">
    <location>
        <begin position="6"/>
        <end position="96"/>
    </location>
</feature>
<feature type="active site" description="Proton acceptor" evidence="2">
    <location>
        <position position="21"/>
    </location>
</feature>
<feature type="active site" description="Nucleophile" evidence="2">
    <location>
        <position position="24"/>
    </location>
</feature>
<feature type="active site" description="Proton donor" evidence="2">
    <location>
        <position position="74"/>
    </location>
</feature>